<sequence length="64" mass="7212">VRDAYIAKPHNCVYECARNEYCNNLCTKNGAKSGYCQWSGKYGNGCWCIELPDNVPIRVPGKCH</sequence>
<comment type="function">
    <text evidence="5">Alpha toxins bind voltage-independently at site-3 of sodium channels (Nav) and inhibit the inactivation of the activated channels, thereby blocking neuronal transmission. This toxin is active against both mammals and insects, and is classified as an alpha-like toxin.</text>
</comment>
<comment type="subcellular location">
    <subcellularLocation>
        <location evidence="2">Secreted</location>
    </subcellularLocation>
</comment>
<comment type="tissue specificity">
    <text evidence="5">Expressed by the venom gland.</text>
</comment>
<comment type="domain">
    <text evidence="2">Has the structural arrangement of an alpha-helix connected to antiparallel beta-sheets by disulfide bonds (CS-alpha/beta).</text>
</comment>
<comment type="toxic dose">
    <text evidence="5">LD(50) is 0.5 mg/kg in mouse (PubMed:10666623).</text>
</comment>
<comment type="similarity">
    <text evidence="4">Belongs to the long (4 C-C) scorpion toxin superfamily. Sodium channel inhibitor family. Alpha subfamily.</text>
</comment>
<dbReference type="PDB" id="1CHZ">
    <property type="method" value="X-ray"/>
    <property type="resolution" value="1.76 A"/>
    <property type="chains" value="A=1-64"/>
</dbReference>
<dbReference type="PDBsum" id="1CHZ"/>
<dbReference type="SMR" id="P58488"/>
<dbReference type="EvolutionaryTrace" id="P58488"/>
<dbReference type="GO" id="GO:0005576">
    <property type="term" value="C:extracellular region"/>
    <property type="evidence" value="ECO:0007669"/>
    <property type="project" value="UniProtKB-SubCell"/>
</dbReference>
<dbReference type="GO" id="GO:0019871">
    <property type="term" value="F:sodium channel inhibitor activity"/>
    <property type="evidence" value="ECO:0007669"/>
    <property type="project" value="InterPro"/>
</dbReference>
<dbReference type="GO" id="GO:0090729">
    <property type="term" value="F:toxin activity"/>
    <property type="evidence" value="ECO:0007669"/>
    <property type="project" value="UniProtKB-KW"/>
</dbReference>
<dbReference type="GO" id="GO:0006952">
    <property type="term" value="P:defense response"/>
    <property type="evidence" value="ECO:0007669"/>
    <property type="project" value="InterPro"/>
</dbReference>
<dbReference type="CDD" id="cd23106">
    <property type="entry name" value="neurotoxins_LC_scorpion"/>
    <property type="match status" value="1"/>
</dbReference>
<dbReference type="FunFam" id="3.30.30.10:FF:000002">
    <property type="entry name" value="Alpha-like toxin BmK-M1"/>
    <property type="match status" value="1"/>
</dbReference>
<dbReference type="Gene3D" id="3.30.30.10">
    <property type="entry name" value="Knottin, scorpion toxin-like"/>
    <property type="match status" value="1"/>
</dbReference>
<dbReference type="InterPro" id="IPR044062">
    <property type="entry name" value="LCN-type_CS_alpha_beta_dom"/>
</dbReference>
<dbReference type="InterPro" id="IPR003614">
    <property type="entry name" value="Scorpion_toxin-like"/>
</dbReference>
<dbReference type="InterPro" id="IPR036574">
    <property type="entry name" value="Scorpion_toxin-like_sf"/>
</dbReference>
<dbReference type="InterPro" id="IPR018218">
    <property type="entry name" value="Scorpion_toxinL"/>
</dbReference>
<dbReference type="InterPro" id="IPR002061">
    <property type="entry name" value="Scorpion_toxinL/defensin"/>
</dbReference>
<dbReference type="Pfam" id="PF00537">
    <property type="entry name" value="Toxin_3"/>
    <property type="match status" value="1"/>
</dbReference>
<dbReference type="PRINTS" id="PR00285">
    <property type="entry name" value="SCORPNTOXIN"/>
</dbReference>
<dbReference type="PRINTS" id="PR00284">
    <property type="entry name" value="TOXIN"/>
</dbReference>
<dbReference type="SMART" id="SM00505">
    <property type="entry name" value="Knot1"/>
    <property type="match status" value="1"/>
</dbReference>
<dbReference type="SUPFAM" id="SSF57095">
    <property type="entry name" value="Scorpion toxin-like"/>
    <property type="match status" value="1"/>
</dbReference>
<dbReference type="PROSITE" id="PS51863">
    <property type="entry name" value="LCN_CSAB"/>
    <property type="match status" value="1"/>
</dbReference>
<protein>
    <recommendedName>
        <fullName evidence="3">Alpha-like toxin BmK M2</fullName>
        <shortName>BmK-M2</shortName>
        <shortName>BmKM2</shortName>
    </recommendedName>
</protein>
<organism>
    <name type="scientific">Olivierus martensii</name>
    <name type="common">Manchurian scorpion</name>
    <name type="synonym">Mesobuthus martensii</name>
    <dbReference type="NCBI Taxonomy" id="34649"/>
    <lineage>
        <taxon>Eukaryota</taxon>
        <taxon>Metazoa</taxon>
        <taxon>Ecdysozoa</taxon>
        <taxon>Arthropoda</taxon>
        <taxon>Chelicerata</taxon>
        <taxon>Arachnida</taxon>
        <taxon>Scorpiones</taxon>
        <taxon>Buthida</taxon>
        <taxon>Buthoidea</taxon>
        <taxon>Buthidae</taxon>
        <taxon>Olivierus</taxon>
    </lineage>
</organism>
<keyword id="KW-0002">3D-structure</keyword>
<keyword id="KW-1015">Disulfide bond</keyword>
<keyword id="KW-0872">Ion channel impairing toxin</keyword>
<keyword id="KW-0528">Neurotoxin</keyword>
<keyword id="KW-0964">Secreted</keyword>
<keyword id="KW-0800">Toxin</keyword>
<keyword id="KW-0738">Voltage-gated sodium channel impairing toxin</keyword>
<feature type="chain" id="PRO_0000066749" description="Alpha-like toxin BmK M2" evidence="2">
    <location>
        <begin position="1"/>
        <end position="64"/>
    </location>
</feature>
<feature type="domain" description="LCN-type CS-alpha/beta" evidence="1">
    <location>
        <begin position="2"/>
        <end position="64"/>
    </location>
</feature>
<feature type="disulfide bond" evidence="2 6">
    <location>
        <begin position="12"/>
        <end position="63"/>
    </location>
</feature>
<feature type="disulfide bond" evidence="2 6">
    <location>
        <begin position="16"/>
        <end position="36"/>
    </location>
</feature>
<feature type="disulfide bond" evidence="2 6">
    <location>
        <begin position="22"/>
        <end position="46"/>
    </location>
</feature>
<feature type="disulfide bond" evidence="2 6">
    <location>
        <begin position="26"/>
        <end position="48"/>
    </location>
</feature>
<feature type="strand" evidence="7">
    <location>
        <begin position="2"/>
        <end position="8"/>
    </location>
</feature>
<feature type="turn" evidence="7">
    <location>
        <begin position="9"/>
        <end position="11"/>
    </location>
</feature>
<feature type="helix" evidence="7">
    <location>
        <begin position="19"/>
        <end position="28"/>
    </location>
</feature>
<feature type="strand" evidence="7">
    <location>
        <begin position="32"/>
        <end position="40"/>
    </location>
</feature>
<feature type="strand" evidence="7">
    <location>
        <begin position="43"/>
        <end position="51"/>
    </location>
</feature>
<name>SCM2_OLIMR</name>
<proteinExistence type="evidence at protein level"/>
<accession>P58488</accession>
<evidence type="ECO:0000255" key="1">
    <source>
        <dbReference type="PROSITE-ProRule" id="PRU01210"/>
    </source>
</evidence>
<evidence type="ECO:0000269" key="2">
    <source>
    </source>
</evidence>
<evidence type="ECO:0000303" key="3">
    <source>
    </source>
</evidence>
<evidence type="ECO:0000305" key="4"/>
<evidence type="ECO:0000305" key="5">
    <source>
    </source>
</evidence>
<evidence type="ECO:0000312" key="6">
    <source>
        <dbReference type="PDB" id="1CHZ"/>
    </source>
</evidence>
<evidence type="ECO:0007829" key="7">
    <source>
        <dbReference type="PDB" id="1CHZ"/>
    </source>
</evidence>
<reference key="1">
    <citation type="journal article" date="2000" name="Acta Crystallogr. D">
        <title>Structure of a new neurotoxin from the scorpion Buthus martensii Karsch at 1.76 A.</title>
        <authorList>
            <person name="He X.-L."/>
            <person name="Deng J.P."/>
            <person name="Wang M."/>
            <person name="Zhang Y."/>
            <person name="Wang D.-C."/>
        </authorList>
    </citation>
    <scope>X-RAY CRYSTALLOGRAPHY (1.76 ANGSTROMS)</scope>
    <scope>FUNCTION</scope>
    <scope>SUBCELLULAR LOCATION</scope>
    <scope>DISULFIDE BOND</scope>
    <scope>TOXIC DOSE</scope>
    <source>
        <tissue>Venom</tissue>
    </source>
</reference>